<comment type="function">
    <text evidence="1 2">Regulates localization of phosphatidylinositol 4-kinase (PI4K) to the plasma membrane, possibly by reducing the association of TTC7 (TTC7A or TTC7B) with the PI4K complex. Acts as a regulator of phosphatidylinositol 4-phosphate (PtdIns(4)P) synthesis (By similarity). May also play a role in fasting-induced catabolism (By similarity).</text>
</comment>
<comment type="subunit">
    <text evidence="1">Interacts (via C-terminal cytoplasmic tail) with PI4KA.</text>
</comment>
<comment type="subcellular location">
    <subcellularLocation>
        <location evidence="1">Cell membrane</location>
        <topology evidence="1">Multi-pass membrane protein</topology>
    </subcellularLocation>
    <text evidence="1">Localizes mainly at the plasma membrane; only a minor fraction localizes on intracellular structures.</text>
</comment>
<comment type="similarity">
    <text evidence="4">Belongs to the DRAM/TMEM150 family.</text>
</comment>
<evidence type="ECO:0000250" key="1">
    <source>
        <dbReference type="UniProtKB" id="Q86TG1"/>
    </source>
</evidence>
<evidence type="ECO:0000250" key="2">
    <source>
        <dbReference type="UniProtKB" id="Q9QZE9"/>
    </source>
</evidence>
<evidence type="ECO:0000255" key="3"/>
<evidence type="ECO:0000305" key="4"/>
<feature type="chain" id="PRO_0000274776" description="Transmembrane protein 150A">
    <location>
        <begin position="1"/>
        <end position="271"/>
    </location>
</feature>
<feature type="topological domain" description="Cytoplasmic" evidence="4">
    <location>
        <begin position="1"/>
        <end position="2"/>
    </location>
</feature>
<feature type="transmembrane region" description="Helical" evidence="3">
    <location>
        <begin position="3"/>
        <end position="23"/>
    </location>
</feature>
<feature type="topological domain" description="Extracellular" evidence="4">
    <location>
        <begin position="24"/>
        <end position="75"/>
    </location>
</feature>
<feature type="transmembrane region" description="Helical" evidence="3">
    <location>
        <begin position="76"/>
        <end position="96"/>
    </location>
</feature>
<feature type="topological domain" description="Cytoplasmic" evidence="4">
    <location>
        <begin position="97"/>
        <end position="108"/>
    </location>
</feature>
<feature type="transmembrane region" description="Helical" evidence="3">
    <location>
        <begin position="109"/>
        <end position="129"/>
    </location>
</feature>
<feature type="topological domain" description="Extracellular" evidence="4">
    <location>
        <begin position="130"/>
        <end position="140"/>
    </location>
</feature>
<feature type="transmembrane region" description="Helical" evidence="3">
    <location>
        <begin position="141"/>
        <end position="161"/>
    </location>
</feature>
<feature type="topological domain" description="Cytoplasmic" evidence="4">
    <location>
        <begin position="162"/>
        <end position="178"/>
    </location>
</feature>
<feature type="transmembrane region" description="Helical" evidence="3">
    <location>
        <begin position="179"/>
        <end position="199"/>
    </location>
</feature>
<feature type="topological domain" description="Extracellular" evidence="4">
    <location>
        <begin position="200"/>
        <end position="211"/>
    </location>
</feature>
<feature type="transmembrane region" description="Helical" evidence="3">
    <location>
        <begin position="212"/>
        <end position="232"/>
    </location>
</feature>
<feature type="topological domain" description="Cytoplasmic" evidence="1">
    <location>
        <begin position="233"/>
        <end position="271"/>
    </location>
</feature>
<feature type="glycosylation site" description="N-linked (GlcNAc...) asparagine" evidence="3">
    <location>
        <position position="37"/>
    </location>
</feature>
<feature type="glycosylation site" description="N-linked (GlcNAc...) asparagine" evidence="3">
    <location>
        <position position="41"/>
    </location>
</feature>
<proteinExistence type="evidence at transcript level"/>
<reference key="1">
    <citation type="journal article" date="2004" name="Genome Res.">
        <title>The status, quality, and expansion of the NIH full-length cDNA project: the Mammalian Gene Collection (MGC).</title>
        <authorList>
            <consortium name="The MGC Project Team"/>
        </authorList>
    </citation>
    <scope>NUCLEOTIDE SEQUENCE [LARGE SCALE MRNA]</scope>
    <source>
        <strain>FVB/N</strain>
        <tissue>Kidney</tissue>
        <tissue>Liver</tissue>
    </source>
</reference>
<name>T150A_MOUSE</name>
<accession>Q91WN2</accession>
<sequence length="271" mass="29066">MTAWILLPVSLSAFSITGIWTVYAMAVMNRHVCPVENWSYNESCSPDPAEQGGPKSCCTLDDVPLISKCGTYPPESCLFSLIGNMGAVMVALICLLRYGQLLEQSRHSWINTTALITGCTNAAGLVVVGNFQVDHAKSLHYIGTGVAFTAGLLFVCLHCVLFYHGATTPLDMAMAYLRSVLAVIAFITLVLSGVFFLHESSQLQHGAALCEWVFVLDILIFYGTFSYEFGTISSDTLVAALQPAPGRACKSSGSSSTSTHLNCAPESIAMI</sequence>
<gene>
    <name type="primary">Tmem150a</name>
    <name type="synonym">Tmem150</name>
</gene>
<dbReference type="EMBL" id="BC014685">
    <property type="protein sequence ID" value="AAH14685.1"/>
    <property type="molecule type" value="mRNA"/>
</dbReference>
<dbReference type="EMBL" id="BC028825">
    <property type="protein sequence ID" value="AAH28825.1"/>
    <property type="molecule type" value="mRNA"/>
</dbReference>
<dbReference type="CCDS" id="CCDS20239.1"/>
<dbReference type="RefSeq" id="NP_659165.1">
    <property type="nucleotide sequence ID" value="NM_144916.3"/>
</dbReference>
<dbReference type="FunCoup" id="Q91WN2">
    <property type="interactions" value="1285"/>
</dbReference>
<dbReference type="STRING" id="10090.ENSMUSP00000063977"/>
<dbReference type="GlyCosmos" id="Q91WN2">
    <property type="glycosylation" value="2 sites, No reported glycans"/>
</dbReference>
<dbReference type="GlyGen" id="Q91WN2">
    <property type="glycosylation" value="2 sites"/>
</dbReference>
<dbReference type="iPTMnet" id="Q91WN2"/>
<dbReference type="PhosphoSitePlus" id="Q91WN2"/>
<dbReference type="SwissPalm" id="Q91WN2"/>
<dbReference type="jPOST" id="Q91WN2"/>
<dbReference type="PaxDb" id="10090-ENSMUSP00000063977"/>
<dbReference type="ProteomicsDB" id="254625"/>
<dbReference type="Antibodypedia" id="16968">
    <property type="antibodies" value="67 antibodies from 19 providers"/>
</dbReference>
<dbReference type="Ensembl" id="ENSMUST00000069695.9">
    <property type="protein sequence ID" value="ENSMUSP00000063977.3"/>
    <property type="gene ID" value="ENSMUSG00000055912.9"/>
</dbReference>
<dbReference type="GeneID" id="232086"/>
<dbReference type="KEGG" id="mmu:232086"/>
<dbReference type="UCSC" id="uc009cih.1">
    <property type="organism name" value="mouse"/>
</dbReference>
<dbReference type="AGR" id="MGI:2385244"/>
<dbReference type="CTD" id="129303"/>
<dbReference type="MGI" id="MGI:2385244">
    <property type="gene designation" value="Tmem150a"/>
</dbReference>
<dbReference type="VEuPathDB" id="HostDB:ENSMUSG00000055912"/>
<dbReference type="eggNOG" id="KOG4320">
    <property type="taxonomic scope" value="Eukaryota"/>
</dbReference>
<dbReference type="GeneTree" id="ENSGT01030000234578"/>
<dbReference type="HOGENOM" id="CLU_059992_1_0_1"/>
<dbReference type="InParanoid" id="Q91WN2"/>
<dbReference type="OMA" id="DPAKHGY"/>
<dbReference type="OrthoDB" id="9925752at2759"/>
<dbReference type="PhylomeDB" id="Q91WN2"/>
<dbReference type="TreeFam" id="TF314508"/>
<dbReference type="BioGRID-ORCS" id="232086">
    <property type="hits" value="3 hits in 80 CRISPR screens"/>
</dbReference>
<dbReference type="ChiTaRS" id="Tmem150a">
    <property type="organism name" value="mouse"/>
</dbReference>
<dbReference type="PRO" id="PR:Q91WN2"/>
<dbReference type="Proteomes" id="UP000000589">
    <property type="component" value="Chromosome 6"/>
</dbReference>
<dbReference type="RNAct" id="Q91WN2">
    <property type="molecule type" value="protein"/>
</dbReference>
<dbReference type="Bgee" id="ENSMUSG00000055912">
    <property type="expression patterns" value="Expressed in yolk sac and 65 other cell types or tissues"/>
</dbReference>
<dbReference type="ExpressionAtlas" id="Q91WN2">
    <property type="expression patterns" value="baseline and differential"/>
</dbReference>
<dbReference type="GO" id="GO:0005886">
    <property type="term" value="C:plasma membrane"/>
    <property type="evidence" value="ECO:0000250"/>
    <property type="project" value="UniProtKB"/>
</dbReference>
<dbReference type="GO" id="GO:0046854">
    <property type="term" value="P:phosphatidylinositol phosphate biosynthetic process"/>
    <property type="evidence" value="ECO:0000250"/>
    <property type="project" value="UniProtKB"/>
</dbReference>
<dbReference type="GO" id="GO:0072659">
    <property type="term" value="P:protein localization to plasma membrane"/>
    <property type="evidence" value="ECO:0000250"/>
    <property type="project" value="UniProtKB"/>
</dbReference>
<dbReference type="InterPro" id="IPR050911">
    <property type="entry name" value="DRAM/TMEM150_Autophagy_Mod"/>
</dbReference>
<dbReference type="InterPro" id="IPR019402">
    <property type="entry name" value="Frag1/DRAM/Sfk1"/>
</dbReference>
<dbReference type="PANTHER" id="PTHR21324">
    <property type="entry name" value="FASTING-INDUCIBLE INTEGRAL MEMBRANE PROTEIN TM6P1-RELATED"/>
    <property type="match status" value="1"/>
</dbReference>
<dbReference type="PANTHER" id="PTHR21324:SF6">
    <property type="entry name" value="TRANSMEMBRANE PROTEIN 150A"/>
    <property type="match status" value="1"/>
</dbReference>
<dbReference type="Pfam" id="PF10277">
    <property type="entry name" value="Frag1"/>
    <property type="match status" value="1"/>
</dbReference>
<protein>
    <recommendedName>
        <fullName>Transmembrane protein 150A</fullName>
    </recommendedName>
    <alternativeName>
        <fullName>Transmembrane protein 150</fullName>
    </alternativeName>
</protein>
<keyword id="KW-1003">Cell membrane</keyword>
<keyword id="KW-0325">Glycoprotein</keyword>
<keyword id="KW-0472">Membrane</keyword>
<keyword id="KW-1185">Reference proteome</keyword>
<keyword id="KW-0812">Transmembrane</keyword>
<keyword id="KW-1133">Transmembrane helix</keyword>
<organism>
    <name type="scientific">Mus musculus</name>
    <name type="common">Mouse</name>
    <dbReference type="NCBI Taxonomy" id="10090"/>
    <lineage>
        <taxon>Eukaryota</taxon>
        <taxon>Metazoa</taxon>
        <taxon>Chordata</taxon>
        <taxon>Craniata</taxon>
        <taxon>Vertebrata</taxon>
        <taxon>Euteleostomi</taxon>
        <taxon>Mammalia</taxon>
        <taxon>Eutheria</taxon>
        <taxon>Euarchontoglires</taxon>
        <taxon>Glires</taxon>
        <taxon>Rodentia</taxon>
        <taxon>Myomorpha</taxon>
        <taxon>Muroidea</taxon>
        <taxon>Muridae</taxon>
        <taxon>Murinae</taxon>
        <taxon>Mus</taxon>
        <taxon>Mus</taxon>
    </lineage>
</organism>